<organism>
    <name type="scientific">Arabidopsis thaliana</name>
    <name type="common">Mouse-ear cress</name>
    <dbReference type="NCBI Taxonomy" id="3702"/>
    <lineage>
        <taxon>Eukaryota</taxon>
        <taxon>Viridiplantae</taxon>
        <taxon>Streptophyta</taxon>
        <taxon>Embryophyta</taxon>
        <taxon>Tracheophyta</taxon>
        <taxon>Spermatophyta</taxon>
        <taxon>Magnoliopsida</taxon>
        <taxon>eudicotyledons</taxon>
        <taxon>Gunneridae</taxon>
        <taxon>Pentapetalae</taxon>
        <taxon>rosids</taxon>
        <taxon>malvids</taxon>
        <taxon>Brassicales</taxon>
        <taxon>Brassicaceae</taxon>
        <taxon>Camelineae</taxon>
        <taxon>Arabidopsis</taxon>
    </lineage>
</organism>
<sequence length="366" mass="41539">MMTKNSIEFDPYIERKAFDETKQGVKGLVDAKITEVPRIFHHRQDILTNKKPSASVSDLEIPIIDFASVHADTASREAIVEKVKYAVENWGFFQVINHSIPLNVLEEIKDGVRRFHEEDPEVKKSFFSRDAGNKKFVYNSNFDLYSSSPSVNWRDSFSCYIAPDPPAPEEIPETCRDAMFEYSKHVLSFGGLLFELLSEALGLKSQTLESMDCVKTLLMICHYYPPCPQPDLTLGITKHSDNSFLTLLLQDNIGGLQILHQDSWVDVSPIHGALVVNIGDFLQLITNDKFVSVEHRVLANRQGPRISVASFFSSSMRPNSRVYGPMKELVSEENPPKYRDITIKEYSKIFFEKGLDGTSHLSNIRI</sequence>
<protein>
    <recommendedName>
        <fullName>1-aminocyclopropane-1-carboxylate oxidase homolog 12</fullName>
        <ecNumber>1.14.-.-</ecNumber>
    </recommendedName>
</protein>
<dbReference type="EC" id="1.14.-.-"/>
<dbReference type="EMBL" id="AB025604">
    <property type="protein sequence ID" value="BAA97488.1"/>
    <property type="molecule type" value="Genomic_DNA"/>
</dbReference>
<dbReference type="EMBL" id="CP002688">
    <property type="protein sequence ID" value="AED97202.1"/>
    <property type="molecule type" value="Genomic_DNA"/>
</dbReference>
<dbReference type="EMBL" id="CP002688">
    <property type="protein sequence ID" value="AED97203.1"/>
    <property type="molecule type" value="Genomic_DNA"/>
</dbReference>
<dbReference type="EMBL" id="AF424616">
    <property type="protein sequence ID" value="AAL11609.1"/>
    <property type="molecule type" value="mRNA"/>
</dbReference>
<dbReference type="EMBL" id="BT024895">
    <property type="protein sequence ID" value="ABD85166.1"/>
    <property type="molecule type" value="mRNA"/>
</dbReference>
<dbReference type="EMBL" id="AK226221">
    <property type="protein sequence ID" value="BAE98386.1"/>
    <property type="molecule type" value="mRNA"/>
</dbReference>
<dbReference type="RefSeq" id="NP_001032104.1">
    <molecule id="Q9LTH7-2"/>
    <property type="nucleotide sequence ID" value="NM_001037027.1"/>
</dbReference>
<dbReference type="RefSeq" id="NP_200762.1">
    <molecule id="Q9LTH7-1"/>
    <property type="nucleotide sequence ID" value="NM_125346.3"/>
</dbReference>
<dbReference type="SMR" id="Q9LTH7"/>
<dbReference type="FunCoup" id="Q9LTH7">
    <property type="interactions" value="21"/>
</dbReference>
<dbReference type="STRING" id="3702.Q9LTH7"/>
<dbReference type="iPTMnet" id="Q9LTH7"/>
<dbReference type="PaxDb" id="3702-AT5G59540.1"/>
<dbReference type="ProteomicsDB" id="243281">
    <molecule id="Q9LTH7-1"/>
</dbReference>
<dbReference type="EnsemblPlants" id="AT5G59540.1">
    <molecule id="Q9LTH7-1"/>
    <property type="protein sequence ID" value="AT5G59540.1"/>
    <property type="gene ID" value="AT5G59540"/>
</dbReference>
<dbReference type="EnsemblPlants" id="AT5G59540.2">
    <molecule id="Q9LTH7-2"/>
    <property type="protein sequence ID" value="AT5G59540.2"/>
    <property type="gene ID" value="AT5G59540"/>
</dbReference>
<dbReference type="GeneID" id="836073"/>
<dbReference type="Gramene" id="AT5G59540.1">
    <molecule id="Q9LTH7-1"/>
    <property type="protein sequence ID" value="AT5G59540.1"/>
    <property type="gene ID" value="AT5G59540"/>
</dbReference>
<dbReference type="Gramene" id="AT5G59540.2">
    <molecule id="Q9LTH7-2"/>
    <property type="protein sequence ID" value="AT5G59540.2"/>
    <property type="gene ID" value="AT5G59540"/>
</dbReference>
<dbReference type="KEGG" id="ath:AT5G59540"/>
<dbReference type="Araport" id="AT5G59540"/>
<dbReference type="TAIR" id="AT5G59540"/>
<dbReference type="eggNOG" id="KOG0143">
    <property type="taxonomic scope" value="Eukaryota"/>
</dbReference>
<dbReference type="HOGENOM" id="CLU_010119_0_0_1"/>
<dbReference type="InParanoid" id="Q9LTH7"/>
<dbReference type="OMA" id="MWIDITP"/>
<dbReference type="OrthoDB" id="288590at2759"/>
<dbReference type="PhylomeDB" id="Q9LTH7"/>
<dbReference type="BioCyc" id="ARA:AT5G59540-MONOMER"/>
<dbReference type="PRO" id="PR:Q9LTH7"/>
<dbReference type="Proteomes" id="UP000006548">
    <property type="component" value="Chromosome 5"/>
</dbReference>
<dbReference type="ExpressionAtlas" id="Q9LTH7">
    <property type="expression patterns" value="baseline and differential"/>
</dbReference>
<dbReference type="GO" id="GO:0051213">
    <property type="term" value="F:dioxygenase activity"/>
    <property type="evidence" value="ECO:0007669"/>
    <property type="project" value="UniProtKB-ARBA"/>
</dbReference>
<dbReference type="GO" id="GO:0046872">
    <property type="term" value="F:metal ion binding"/>
    <property type="evidence" value="ECO:0007669"/>
    <property type="project" value="UniProtKB-KW"/>
</dbReference>
<dbReference type="GO" id="GO:0009058">
    <property type="term" value="P:biosynthetic process"/>
    <property type="evidence" value="ECO:0007669"/>
    <property type="project" value="UniProtKB-ARBA"/>
</dbReference>
<dbReference type="FunFam" id="2.60.120.330:FF:000005">
    <property type="entry name" value="1-aminocyclopropane-1-carboxylate oxidase homolog 1"/>
    <property type="match status" value="1"/>
</dbReference>
<dbReference type="Gene3D" id="2.60.120.330">
    <property type="entry name" value="B-lactam Antibiotic, Isopenicillin N Synthase, Chain"/>
    <property type="match status" value="1"/>
</dbReference>
<dbReference type="InterPro" id="IPR026992">
    <property type="entry name" value="DIOX_N"/>
</dbReference>
<dbReference type="InterPro" id="IPR044861">
    <property type="entry name" value="IPNS-like_FE2OG_OXY"/>
</dbReference>
<dbReference type="InterPro" id="IPR027443">
    <property type="entry name" value="IPNS-like_sf"/>
</dbReference>
<dbReference type="InterPro" id="IPR005123">
    <property type="entry name" value="Oxoglu/Fe-dep_dioxygenase_dom"/>
</dbReference>
<dbReference type="PANTHER" id="PTHR10209:SF714">
    <property type="entry name" value="1-AMINOCYCLOPROPANE-1-CARBOXYLATE OXIDASE HOMOLOG 11-RELATED"/>
    <property type="match status" value="1"/>
</dbReference>
<dbReference type="PANTHER" id="PTHR10209">
    <property type="entry name" value="OXIDOREDUCTASE, 2OG-FE II OXYGENASE FAMILY PROTEIN"/>
    <property type="match status" value="1"/>
</dbReference>
<dbReference type="Pfam" id="PF03171">
    <property type="entry name" value="2OG-FeII_Oxy"/>
    <property type="match status" value="1"/>
</dbReference>
<dbReference type="Pfam" id="PF14226">
    <property type="entry name" value="DIOX_N"/>
    <property type="match status" value="1"/>
</dbReference>
<dbReference type="SUPFAM" id="SSF51197">
    <property type="entry name" value="Clavaminate synthase-like"/>
    <property type="match status" value="1"/>
</dbReference>
<dbReference type="PROSITE" id="PS51471">
    <property type="entry name" value="FE2OG_OXY"/>
    <property type="match status" value="1"/>
</dbReference>
<accession>Q9LTH7</accession>
<accession>Q2V2X0</accession>
<name>ACH12_ARATH</name>
<proteinExistence type="evidence at transcript level"/>
<keyword id="KW-0025">Alternative splicing</keyword>
<keyword id="KW-0408">Iron</keyword>
<keyword id="KW-0479">Metal-binding</keyword>
<keyword id="KW-0560">Oxidoreductase</keyword>
<keyword id="KW-1185">Reference proteome</keyword>
<comment type="cofactor">
    <cofactor evidence="1">
        <name>Fe(2+)</name>
        <dbReference type="ChEBI" id="CHEBI:29033"/>
    </cofactor>
    <text evidence="1">Binds 1 Fe(2+) ion per subunit.</text>
</comment>
<comment type="alternative products">
    <event type="alternative splicing"/>
    <isoform>
        <id>Q9LTH7-1</id>
        <name>1</name>
        <sequence type="displayed"/>
    </isoform>
    <isoform>
        <id>Q9LTH7-2</id>
        <name>2</name>
        <sequence type="described" ref="VSP_041042 VSP_041043"/>
    </isoform>
</comment>
<comment type="similarity">
    <text evidence="2">Belongs to the iron/ascorbate-dependent oxidoreductase family.</text>
</comment>
<reference key="1">
    <citation type="submission" date="2005-04" db="EMBL/GenBank/DDBJ databases">
        <title>Structural analysis of Arabidopsis thaliana chromosome 5. XI.</title>
        <authorList>
            <person name="Kaneko T."/>
            <person name="Katoh T."/>
            <person name="Asamizu E."/>
            <person name="Sato S."/>
            <person name="Nakamura Y."/>
            <person name="Kotani H."/>
            <person name="Tabata S."/>
        </authorList>
    </citation>
    <scope>NUCLEOTIDE SEQUENCE [LARGE SCALE GENOMIC DNA]</scope>
    <source>
        <strain>cv. Columbia</strain>
    </source>
</reference>
<reference key="2">
    <citation type="journal article" date="2017" name="Plant J.">
        <title>Araport11: a complete reannotation of the Arabidopsis thaliana reference genome.</title>
        <authorList>
            <person name="Cheng C.Y."/>
            <person name="Krishnakumar V."/>
            <person name="Chan A.P."/>
            <person name="Thibaud-Nissen F."/>
            <person name="Schobel S."/>
            <person name="Town C.D."/>
        </authorList>
    </citation>
    <scope>GENOME REANNOTATION</scope>
    <source>
        <strain>cv. Columbia</strain>
    </source>
</reference>
<reference key="3">
    <citation type="journal article" date="2003" name="Science">
        <title>Empirical analysis of transcriptional activity in the Arabidopsis genome.</title>
        <authorList>
            <person name="Yamada K."/>
            <person name="Lim J."/>
            <person name="Dale J.M."/>
            <person name="Chen H."/>
            <person name="Shinn P."/>
            <person name="Palm C.J."/>
            <person name="Southwick A.M."/>
            <person name="Wu H.C."/>
            <person name="Kim C.J."/>
            <person name="Nguyen M."/>
            <person name="Pham P.K."/>
            <person name="Cheuk R.F."/>
            <person name="Karlin-Newmann G."/>
            <person name="Liu S.X."/>
            <person name="Lam B."/>
            <person name="Sakano H."/>
            <person name="Wu T."/>
            <person name="Yu G."/>
            <person name="Miranda M."/>
            <person name="Quach H.L."/>
            <person name="Tripp M."/>
            <person name="Chang C.H."/>
            <person name="Lee J.M."/>
            <person name="Toriumi M.J."/>
            <person name="Chan M.M."/>
            <person name="Tang C.C."/>
            <person name="Onodera C.S."/>
            <person name="Deng J.M."/>
            <person name="Akiyama K."/>
            <person name="Ansari Y."/>
            <person name="Arakawa T."/>
            <person name="Banh J."/>
            <person name="Banno F."/>
            <person name="Bowser L."/>
            <person name="Brooks S.Y."/>
            <person name="Carninci P."/>
            <person name="Chao Q."/>
            <person name="Choy N."/>
            <person name="Enju A."/>
            <person name="Goldsmith A.D."/>
            <person name="Gurjal M."/>
            <person name="Hansen N.F."/>
            <person name="Hayashizaki Y."/>
            <person name="Johnson-Hopson C."/>
            <person name="Hsuan V.W."/>
            <person name="Iida K."/>
            <person name="Karnes M."/>
            <person name="Khan S."/>
            <person name="Koesema E."/>
            <person name="Ishida J."/>
            <person name="Jiang P.X."/>
            <person name="Jones T."/>
            <person name="Kawai J."/>
            <person name="Kamiya A."/>
            <person name="Meyers C."/>
            <person name="Nakajima M."/>
            <person name="Narusaka M."/>
            <person name="Seki M."/>
            <person name="Sakurai T."/>
            <person name="Satou M."/>
            <person name="Tamse R."/>
            <person name="Vaysberg M."/>
            <person name="Wallender E.K."/>
            <person name="Wong C."/>
            <person name="Yamamura Y."/>
            <person name="Yuan S."/>
            <person name="Shinozaki K."/>
            <person name="Davis R.W."/>
            <person name="Theologis A."/>
            <person name="Ecker J.R."/>
        </authorList>
    </citation>
    <scope>NUCLEOTIDE SEQUENCE [LARGE SCALE MRNA] (ISOFORM 1)</scope>
    <source>
        <strain>cv. Columbia</strain>
    </source>
</reference>
<reference key="4">
    <citation type="submission" date="2006-03" db="EMBL/GenBank/DDBJ databases">
        <title>Arabidopsis ORF clones.</title>
        <authorList>
            <person name="Shinn P."/>
            <person name="Chen H."/>
            <person name="Kim C.J."/>
            <person name="Ecker J.R."/>
        </authorList>
    </citation>
    <scope>NUCLEOTIDE SEQUENCE [LARGE SCALE MRNA] (ISOFORM 1)</scope>
    <source>
        <strain>cv. Columbia</strain>
    </source>
</reference>
<reference key="5">
    <citation type="submission" date="2006-07" db="EMBL/GenBank/DDBJ databases">
        <title>Large-scale analysis of RIKEN Arabidopsis full-length (RAFL) cDNAs.</title>
        <authorList>
            <person name="Totoki Y."/>
            <person name="Seki M."/>
            <person name="Ishida J."/>
            <person name="Nakajima M."/>
            <person name="Enju A."/>
            <person name="Kamiya A."/>
            <person name="Narusaka M."/>
            <person name="Shin-i T."/>
            <person name="Nakagawa M."/>
            <person name="Sakamoto N."/>
            <person name="Oishi K."/>
            <person name="Kohara Y."/>
            <person name="Kobayashi M."/>
            <person name="Toyoda A."/>
            <person name="Sakaki Y."/>
            <person name="Sakurai T."/>
            <person name="Iida K."/>
            <person name="Akiyama K."/>
            <person name="Satou M."/>
            <person name="Toyoda T."/>
            <person name="Konagaya A."/>
            <person name="Carninci P."/>
            <person name="Kawai J."/>
            <person name="Hayashizaki Y."/>
            <person name="Shinozaki K."/>
        </authorList>
    </citation>
    <scope>NUCLEOTIDE SEQUENCE [LARGE SCALE MRNA] (ISOFORM 1)</scope>
    <source>
        <strain>cv. Columbia</strain>
    </source>
</reference>
<evidence type="ECO:0000255" key="1">
    <source>
        <dbReference type="PROSITE-ProRule" id="PRU00805"/>
    </source>
</evidence>
<evidence type="ECO:0000305" key="2"/>
<feature type="chain" id="PRO_0000408287" description="1-aminocyclopropane-1-carboxylate oxidase homolog 12">
    <location>
        <begin position="1"/>
        <end position="366"/>
    </location>
</feature>
<feature type="domain" description="Fe2OG dioxygenase" evidence="1">
    <location>
        <begin position="215"/>
        <end position="314"/>
    </location>
</feature>
<feature type="binding site" evidence="1">
    <location>
        <position position="239"/>
    </location>
    <ligand>
        <name>Fe cation</name>
        <dbReference type="ChEBI" id="CHEBI:24875"/>
    </ligand>
</feature>
<feature type="binding site" evidence="1">
    <location>
        <position position="241"/>
    </location>
    <ligand>
        <name>Fe cation</name>
        <dbReference type="ChEBI" id="CHEBI:24875"/>
    </ligand>
</feature>
<feature type="binding site" evidence="1">
    <location>
        <position position="295"/>
    </location>
    <ligand>
        <name>Fe cation</name>
        <dbReference type="ChEBI" id="CHEBI:24875"/>
    </ligand>
</feature>
<feature type="binding site" evidence="1">
    <location>
        <position position="305"/>
    </location>
    <ligand>
        <name>2-oxoglutarate</name>
        <dbReference type="ChEBI" id="CHEBI:16810"/>
    </ligand>
</feature>
<feature type="splice variant" id="VSP_041042" description="In isoform 2." evidence="2">
    <original>LI</original>
    <variation>VK</variation>
    <location>
        <begin position="284"/>
        <end position="285"/>
    </location>
</feature>
<feature type="splice variant" id="VSP_041043" description="In isoform 2." evidence="2">
    <location>
        <begin position="286"/>
        <end position="366"/>
    </location>
</feature>
<gene>
    <name type="ordered locus">At5g59540</name>
    <name type="ORF">F2O15.6</name>
</gene>